<sequence>MSLEPKIPLPNSLQKPLSRFYEYLRSEKGLSLHTQRNYKQQLETMAAHLVTLGLKDWSQVDAAWVRQLASKGMREGMKASSIATRLSSLRSFFDFLVLRGEMTANPAKGVSAPRKQRPLPKNLDVDEVGQLLDVNEDDPLSIRDRAMMEVMYGAGLRLAELVGINLKDVLGRQGEIRVIGKGDKERKAPFSGLAKEWVDKWLKVRGALASPGETALFVSKLGTRISHRSVQKRMEEWGKKQSVASHISPHKLRHSFATHVLESSQNLRAVQELLGHENISTTQVYTHLDFQHLAQAYDQAHPRARKKNKD</sequence>
<organism>
    <name type="scientific">Vibrio atlanticus (strain LGP32)</name>
    <name type="common">Vibrio splendidus (strain Mel32)</name>
    <dbReference type="NCBI Taxonomy" id="575788"/>
    <lineage>
        <taxon>Bacteria</taxon>
        <taxon>Pseudomonadati</taxon>
        <taxon>Pseudomonadota</taxon>
        <taxon>Gammaproteobacteria</taxon>
        <taxon>Vibrionales</taxon>
        <taxon>Vibrionaceae</taxon>
        <taxon>Vibrio</taxon>
    </lineage>
</organism>
<gene>
    <name evidence="1" type="primary">xerC</name>
    <name type="ordered locus">VS_3045</name>
</gene>
<dbReference type="EMBL" id="FM954972">
    <property type="protein sequence ID" value="CAV20323.1"/>
    <property type="molecule type" value="Genomic_DNA"/>
</dbReference>
<dbReference type="SMR" id="B7VMD2"/>
<dbReference type="STRING" id="575788.VS_3045"/>
<dbReference type="KEGG" id="vsp:VS_3045"/>
<dbReference type="PATRIC" id="fig|575788.5.peg.4233"/>
<dbReference type="eggNOG" id="COG4973">
    <property type="taxonomic scope" value="Bacteria"/>
</dbReference>
<dbReference type="HOGENOM" id="CLU_027562_9_0_6"/>
<dbReference type="Proteomes" id="UP000009100">
    <property type="component" value="Chromosome 1"/>
</dbReference>
<dbReference type="GO" id="GO:0005737">
    <property type="term" value="C:cytoplasm"/>
    <property type="evidence" value="ECO:0007669"/>
    <property type="project" value="UniProtKB-SubCell"/>
</dbReference>
<dbReference type="GO" id="GO:0003677">
    <property type="term" value="F:DNA binding"/>
    <property type="evidence" value="ECO:0007669"/>
    <property type="project" value="UniProtKB-KW"/>
</dbReference>
<dbReference type="GO" id="GO:0009037">
    <property type="term" value="F:tyrosine-based site-specific recombinase activity"/>
    <property type="evidence" value="ECO:0007669"/>
    <property type="project" value="UniProtKB-UniRule"/>
</dbReference>
<dbReference type="GO" id="GO:0051301">
    <property type="term" value="P:cell division"/>
    <property type="evidence" value="ECO:0007669"/>
    <property type="project" value="UniProtKB-KW"/>
</dbReference>
<dbReference type="GO" id="GO:0007059">
    <property type="term" value="P:chromosome segregation"/>
    <property type="evidence" value="ECO:0007669"/>
    <property type="project" value="UniProtKB-UniRule"/>
</dbReference>
<dbReference type="GO" id="GO:0006313">
    <property type="term" value="P:DNA transposition"/>
    <property type="evidence" value="ECO:0007669"/>
    <property type="project" value="UniProtKB-UniRule"/>
</dbReference>
<dbReference type="CDD" id="cd00798">
    <property type="entry name" value="INT_XerDC_C"/>
    <property type="match status" value="1"/>
</dbReference>
<dbReference type="Gene3D" id="1.10.150.130">
    <property type="match status" value="1"/>
</dbReference>
<dbReference type="Gene3D" id="1.10.443.10">
    <property type="entry name" value="Intergrase catalytic core"/>
    <property type="match status" value="1"/>
</dbReference>
<dbReference type="HAMAP" id="MF_01808">
    <property type="entry name" value="Recomb_XerC_XerD"/>
    <property type="match status" value="1"/>
</dbReference>
<dbReference type="InterPro" id="IPR044068">
    <property type="entry name" value="CB"/>
</dbReference>
<dbReference type="InterPro" id="IPR011010">
    <property type="entry name" value="DNA_brk_join_enz"/>
</dbReference>
<dbReference type="InterPro" id="IPR013762">
    <property type="entry name" value="Integrase-like_cat_sf"/>
</dbReference>
<dbReference type="InterPro" id="IPR002104">
    <property type="entry name" value="Integrase_catalytic"/>
</dbReference>
<dbReference type="InterPro" id="IPR010998">
    <property type="entry name" value="Integrase_recombinase_N"/>
</dbReference>
<dbReference type="InterPro" id="IPR004107">
    <property type="entry name" value="Integrase_SAM-like_N"/>
</dbReference>
<dbReference type="InterPro" id="IPR011931">
    <property type="entry name" value="Recomb_XerC"/>
</dbReference>
<dbReference type="InterPro" id="IPR023009">
    <property type="entry name" value="Tyrosine_recombinase_XerC/XerD"/>
</dbReference>
<dbReference type="InterPro" id="IPR050090">
    <property type="entry name" value="Tyrosine_recombinase_XerCD"/>
</dbReference>
<dbReference type="NCBIfam" id="TIGR02224">
    <property type="entry name" value="recomb_XerC"/>
    <property type="match status" value="1"/>
</dbReference>
<dbReference type="PANTHER" id="PTHR30349">
    <property type="entry name" value="PHAGE INTEGRASE-RELATED"/>
    <property type="match status" value="1"/>
</dbReference>
<dbReference type="PANTHER" id="PTHR30349:SF81">
    <property type="entry name" value="TYROSINE RECOMBINASE XERC"/>
    <property type="match status" value="1"/>
</dbReference>
<dbReference type="Pfam" id="PF02899">
    <property type="entry name" value="Phage_int_SAM_1"/>
    <property type="match status" value="1"/>
</dbReference>
<dbReference type="Pfam" id="PF00589">
    <property type="entry name" value="Phage_integrase"/>
    <property type="match status" value="1"/>
</dbReference>
<dbReference type="SUPFAM" id="SSF56349">
    <property type="entry name" value="DNA breaking-rejoining enzymes"/>
    <property type="match status" value="1"/>
</dbReference>
<dbReference type="PROSITE" id="PS51900">
    <property type="entry name" value="CB"/>
    <property type="match status" value="1"/>
</dbReference>
<dbReference type="PROSITE" id="PS51898">
    <property type="entry name" value="TYR_RECOMBINASE"/>
    <property type="match status" value="1"/>
</dbReference>
<protein>
    <recommendedName>
        <fullName evidence="1">Tyrosine recombinase XerC</fullName>
    </recommendedName>
</protein>
<feature type="chain" id="PRO_1000187619" description="Tyrosine recombinase XerC">
    <location>
        <begin position="1"/>
        <end position="310"/>
    </location>
</feature>
<feature type="domain" description="Core-binding (CB)" evidence="3">
    <location>
        <begin position="11"/>
        <end position="97"/>
    </location>
</feature>
<feature type="domain" description="Tyr recombinase" evidence="2">
    <location>
        <begin position="118"/>
        <end position="298"/>
    </location>
</feature>
<feature type="active site" evidence="1">
    <location>
        <position position="157"/>
    </location>
</feature>
<feature type="active site" evidence="1">
    <location>
        <position position="181"/>
    </location>
</feature>
<feature type="active site" evidence="1">
    <location>
        <position position="250"/>
    </location>
</feature>
<feature type="active site" evidence="1">
    <location>
        <position position="253"/>
    </location>
</feature>
<feature type="active site" evidence="1">
    <location>
        <position position="276"/>
    </location>
</feature>
<feature type="active site" description="O-(3'-phospho-DNA)-tyrosine intermediate" evidence="1">
    <location>
        <position position="285"/>
    </location>
</feature>
<reference key="1">
    <citation type="submission" date="2009-02" db="EMBL/GenBank/DDBJ databases">
        <title>Vibrio splendidus str. LGP32 complete genome.</title>
        <authorList>
            <person name="Mazel D."/>
            <person name="Le Roux F."/>
        </authorList>
    </citation>
    <scope>NUCLEOTIDE SEQUENCE [LARGE SCALE GENOMIC DNA]</scope>
    <source>
        <strain>LGP32</strain>
    </source>
</reference>
<keyword id="KW-0131">Cell cycle</keyword>
<keyword id="KW-0132">Cell division</keyword>
<keyword id="KW-0159">Chromosome partition</keyword>
<keyword id="KW-0963">Cytoplasm</keyword>
<keyword id="KW-0229">DNA integration</keyword>
<keyword id="KW-0233">DNA recombination</keyword>
<keyword id="KW-0238">DNA-binding</keyword>
<proteinExistence type="inferred from homology"/>
<evidence type="ECO:0000255" key="1">
    <source>
        <dbReference type="HAMAP-Rule" id="MF_01808"/>
    </source>
</evidence>
<evidence type="ECO:0000255" key="2">
    <source>
        <dbReference type="PROSITE-ProRule" id="PRU01246"/>
    </source>
</evidence>
<evidence type="ECO:0000255" key="3">
    <source>
        <dbReference type="PROSITE-ProRule" id="PRU01248"/>
    </source>
</evidence>
<accession>B7VMD2</accession>
<comment type="function">
    <text evidence="1">Site-specific tyrosine recombinase, which acts by catalyzing the cutting and rejoining of the recombining DNA molecules. The XerC-XerD complex is essential to convert dimers of the bacterial chromosome into monomers to permit their segregation at cell division. It also contributes to the segregational stability of plasmids.</text>
</comment>
<comment type="subunit">
    <text evidence="1">Forms a cyclic heterotetrameric complex composed of two molecules of XerC and two molecules of XerD.</text>
</comment>
<comment type="subcellular location">
    <subcellularLocation>
        <location evidence="1">Cytoplasm</location>
    </subcellularLocation>
</comment>
<comment type="similarity">
    <text evidence="1">Belongs to the 'phage' integrase family. XerC subfamily.</text>
</comment>
<name>XERC_VIBA3</name>